<organism>
    <name type="scientific">Sinorhizobium medicae (strain WSM419)</name>
    <name type="common">Ensifer medicae</name>
    <dbReference type="NCBI Taxonomy" id="366394"/>
    <lineage>
        <taxon>Bacteria</taxon>
        <taxon>Pseudomonadati</taxon>
        <taxon>Pseudomonadota</taxon>
        <taxon>Alphaproteobacteria</taxon>
        <taxon>Hyphomicrobiales</taxon>
        <taxon>Rhizobiaceae</taxon>
        <taxon>Sinorhizobium/Ensifer group</taxon>
        <taxon>Sinorhizobium</taxon>
    </lineage>
</organism>
<accession>A6UDW8</accession>
<reference key="1">
    <citation type="submission" date="2007-06" db="EMBL/GenBank/DDBJ databases">
        <title>Complete sequence of Sinorhizobium medicae WSM419 chromosome.</title>
        <authorList>
            <consortium name="US DOE Joint Genome Institute"/>
            <person name="Copeland A."/>
            <person name="Lucas S."/>
            <person name="Lapidus A."/>
            <person name="Barry K."/>
            <person name="Glavina del Rio T."/>
            <person name="Dalin E."/>
            <person name="Tice H."/>
            <person name="Pitluck S."/>
            <person name="Chain P."/>
            <person name="Malfatti S."/>
            <person name="Shin M."/>
            <person name="Vergez L."/>
            <person name="Schmutz J."/>
            <person name="Larimer F."/>
            <person name="Land M."/>
            <person name="Hauser L."/>
            <person name="Kyrpides N."/>
            <person name="Mikhailova N."/>
            <person name="Reeve W.G."/>
            <person name="Richardson P."/>
        </authorList>
    </citation>
    <scope>NUCLEOTIDE SEQUENCE [LARGE SCALE GENOMIC DNA]</scope>
    <source>
        <strain>WSM419</strain>
    </source>
</reference>
<dbReference type="EC" id="2.7.7.7" evidence="1"/>
<dbReference type="EMBL" id="CP000738">
    <property type="protein sequence ID" value="ABR61848.1"/>
    <property type="molecule type" value="Genomic_DNA"/>
</dbReference>
<dbReference type="RefSeq" id="WP_012067229.1">
    <property type="nucleotide sequence ID" value="NC_009636.1"/>
</dbReference>
<dbReference type="RefSeq" id="YP_001328683.1">
    <property type="nucleotide sequence ID" value="NC_009636.1"/>
</dbReference>
<dbReference type="SMR" id="A6UDW8"/>
<dbReference type="STRING" id="366394.Smed_3021"/>
<dbReference type="KEGG" id="smd:Smed_3021"/>
<dbReference type="PATRIC" id="fig|366394.8.peg.6246"/>
<dbReference type="eggNOG" id="COG0587">
    <property type="taxonomic scope" value="Bacteria"/>
</dbReference>
<dbReference type="HOGENOM" id="CLU_001600_4_0_5"/>
<dbReference type="OrthoDB" id="9803237at2"/>
<dbReference type="Proteomes" id="UP000001108">
    <property type="component" value="Chromosome"/>
</dbReference>
<dbReference type="GO" id="GO:0005737">
    <property type="term" value="C:cytoplasm"/>
    <property type="evidence" value="ECO:0007669"/>
    <property type="project" value="UniProtKB-SubCell"/>
</dbReference>
<dbReference type="GO" id="GO:0008408">
    <property type="term" value="F:3'-5' exonuclease activity"/>
    <property type="evidence" value="ECO:0007669"/>
    <property type="project" value="InterPro"/>
</dbReference>
<dbReference type="GO" id="GO:0003887">
    <property type="term" value="F:DNA-directed DNA polymerase activity"/>
    <property type="evidence" value="ECO:0007669"/>
    <property type="project" value="UniProtKB-UniRule"/>
</dbReference>
<dbReference type="GO" id="GO:0003676">
    <property type="term" value="F:nucleic acid binding"/>
    <property type="evidence" value="ECO:0007669"/>
    <property type="project" value="InterPro"/>
</dbReference>
<dbReference type="GO" id="GO:0006281">
    <property type="term" value="P:DNA repair"/>
    <property type="evidence" value="ECO:0007669"/>
    <property type="project" value="UniProtKB-UniRule"/>
</dbReference>
<dbReference type="GO" id="GO:0006260">
    <property type="term" value="P:DNA replication"/>
    <property type="evidence" value="ECO:0007669"/>
    <property type="project" value="UniProtKB-KW"/>
</dbReference>
<dbReference type="CDD" id="cd04485">
    <property type="entry name" value="DnaE_OBF"/>
    <property type="match status" value="1"/>
</dbReference>
<dbReference type="CDD" id="cd07434">
    <property type="entry name" value="PHP_PolIIIA_DnaE2"/>
    <property type="match status" value="1"/>
</dbReference>
<dbReference type="FunFam" id="1.10.150.870:FF:000002">
    <property type="entry name" value="Error-prone DNA polymerase"/>
    <property type="match status" value="1"/>
</dbReference>
<dbReference type="Gene3D" id="1.10.150.870">
    <property type="match status" value="1"/>
</dbReference>
<dbReference type="Gene3D" id="3.20.20.140">
    <property type="entry name" value="Metal-dependent hydrolases"/>
    <property type="match status" value="1"/>
</dbReference>
<dbReference type="HAMAP" id="MF_01902">
    <property type="entry name" value="DNApol_error_prone"/>
    <property type="match status" value="1"/>
</dbReference>
<dbReference type="InterPro" id="IPR011708">
    <property type="entry name" value="DNA_pol3_alpha_NTPase_dom"/>
</dbReference>
<dbReference type="InterPro" id="IPR040982">
    <property type="entry name" value="DNA_pol3_finger"/>
</dbReference>
<dbReference type="InterPro" id="IPR023073">
    <property type="entry name" value="DnaE2"/>
</dbReference>
<dbReference type="InterPro" id="IPR004805">
    <property type="entry name" value="DnaE2/DnaE/PolC"/>
</dbReference>
<dbReference type="InterPro" id="IPR029460">
    <property type="entry name" value="DNAPol_HHH"/>
</dbReference>
<dbReference type="InterPro" id="IPR004365">
    <property type="entry name" value="NA-bd_OB_tRNA"/>
</dbReference>
<dbReference type="NCBIfam" id="TIGR00594">
    <property type="entry name" value="polc"/>
    <property type="match status" value="1"/>
</dbReference>
<dbReference type="NCBIfam" id="NF004225">
    <property type="entry name" value="PRK05672.1"/>
    <property type="match status" value="1"/>
</dbReference>
<dbReference type="PANTHER" id="PTHR32294">
    <property type="entry name" value="DNA POLYMERASE III SUBUNIT ALPHA"/>
    <property type="match status" value="1"/>
</dbReference>
<dbReference type="PANTHER" id="PTHR32294:SF4">
    <property type="entry name" value="ERROR-PRONE DNA POLYMERASE"/>
    <property type="match status" value="1"/>
</dbReference>
<dbReference type="Pfam" id="PF07733">
    <property type="entry name" value="DNA_pol3_alpha"/>
    <property type="match status" value="1"/>
</dbReference>
<dbReference type="Pfam" id="PF17657">
    <property type="entry name" value="DNA_pol3_finger"/>
    <property type="match status" value="1"/>
</dbReference>
<dbReference type="Pfam" id="PF14579">
    <property type="entry name" value="HHH_6"/>
    <property type="match status" value="1"/>
</dbReference>
<dbReference type="Pfam" id="PF01336">
    <property type="entry name" value="tRNA_anti-codon"/>
    <property type="match status" value="1"/>
</dbReference>
<protein>
    <recommendedName>
        <fullName evidence="1">Error-prone DNA polymerase</fullName>
        <ecNumber evidence="1">2.7.7.7</ecNumber>
    </recommendedName>
</protein>
<proteinExistence type="inferred from homology"/>
<sequence length="1116" mass="124942">MSGDTAFYELGACTNFSFLEGAAPAEEMVVFAKKARLAGLGIADRNSVAGVVRAHAKAKMENYPFQPGARLVFADGTPDVLAYPRNRRGWGHLCRLLSAGNLRSKKGDCTLHLADLLEWQEELLLIVMPDRVRPEPESLKPLLGKLQEHAGNRLYLGLAPRYDGFDRHDFAVLATVARKAGIGLLATNDALYHDPDYRPLADVVTAIREHVPVAGAGFLLQKNAERHLKSPREMARLFSDYPEAIANTQKFFRHLAFSLDELRHQYPDENAGGETPAESLRRLVSEGAAERYPEGVPEKVQRQIEYELELINDKKYEPYFLTVHKLVKFARSEKILCQGRGSAANSSVCFCLGITDVDPQKFTLLFDRFLSKDRDEPPDIDVDFEHERREEVIQYIYRTYGKEHAGLAAAVISYRSRSAGREVAKAFGFSEDVQSALVSSIWGWGNSPFTEEQARGAGLDAADPSTRRVLAYASLLMNYPRHLSQHVGGFVITRDRLDEVVPIMNTAMPDRYMIEWDKDDLDELKILKVDVLALGMLTCLAKGFKLLEAHYGEPITLAEIYQDHQPAVYDMICRADTVGVFQIESRAQMSMLPRLQPREMYDLVIEVAIVRPGPIQGNMVHPYLKRREGQRKGEKVKYPSPELKAVLERTLGVPLFQEQAMQIAITAAGFSPSEADRLRRAMATFKRTGTIHTFERKMVEGMVANGYEREFAERCFNQIKGFGEYGFPESHAASFASLVYASAWLKTYYPDIFCAALLNAQPMGFYAPAQLVRDAREHGVKVLPVDINHSDWDALLEGEGQFRKESVDPRHADMREVIKTRKAVRLGFRLVKGLKQADMGALVACRGEGYRSVHDLWFRSGLSRSVLERLADADAFRSLGLDRRAALWAVKALDEQSAVERLPLFEGAGSLDLRAEPKVALPEMPAGEQVIHDYRTLTLSLKAHPVSFMREDFSRTGILRSRDLAATATGKWVTVAGLVLVRQRPGSANGVIFMTIEDETGIANIIVWEKTFRKYRPQVMGSRLVKIRGRLQNQSGVIHVVADHLEDITPMLGLLRREARRFGANDRADGALRPSGDAREKRKLRQLRLGLPGGAEPEGEAAAQVAEAMPKGRNFH</sequence>
<keyword id="KW-0963">Cytoplasm</keyword>
<keyword id="KW-0227">DNA damage</keyword>
<keyword id="KW-0234">DNA repair</keyword>
<keyword id="KW-0235">DNA replication</keyword>
<keyword id="KW-0239">DNA-directed DNA polymerase</keyword>
<keyword id="KW-0548">Nucleotidyltransferase</keyword>
<keyword id="KW-0808">Transferase</keyword>
<name>DNAE2_SINMW</name>
<evidence type="ECO:0000255" key="1">
    <source>
        <dbReference type="HAMAP-Rule" id="MF_01902"/>
    </source>
</evidence>
<feature type="chain" id="PRO_1000070598" description="Error-prone DNA polymerase">
    <location>
        <begin position="1"/>
        <end position="1116"/>
    </location>
</feature>
<gene>
    <name evidence="1" type="primary">dnaE2</name>
    <name type="ordered locus">Smed_3021</name>
</gene>
<comment type="function">
    <text evidence="1">DNA polymerase involved in damage-induced mutagenesis and translesion synthesis (TLS). It is not the major replicative DNA polymerase.</text>
</comment>
<comment type="catalytic activity">
    <reaction evidence="1">
        <text>DNA(n) + a 2'-deoxyribonucleoside 5'-triphosphate = DNA(n+1) + diphosphate</text>
        <dbReference type="Rhea" id="RHEA:22508"/>
        <dbReference type="Rhea" id="RHEA-COMP:17339"/>
        <dbReference type="Rhea" id="RHEA-COMP:17340"/>
        <dbReference type="ChEBI" id="CHEBI:33019"/>
        <dbReference type="ChEBI" id="CHEBI:61560"/>
        <dbReference type="ChEBI" id="CHEBI:173112"/>
        <dbReference type="EC" id="2.7.7.7"/>
    </reaction>
</comment>
<comment type="subcellular location">
    <subcellularLocation>
        <location evidence="1">Cytoplasm</location>
    </subcellularLocation>
</comment>
<comment type="similarity">
    <text evidence="1">Belongs to the DNA polymerase type-C family. DnaE2 subfamily.</text>
</comment>